<reference key="1">
    <citation type="journal article" date="2005" name="J. Bacteriol.">
        <title>Completion of the genome sequence of Brucella abortus and comparison to the highly similar genomes of Brucella melitensis and Brucella suis.</title>
        <authorList>
            <person name="Halling S.M."/>
            <person name="Peterson-Burch B.D."/>
            <person name="Bricker B.J."/>
            <person name="Zuerner R.L."/>
            <person name="Qing Z."/>
            <person name="Li L.-L."/>
            <person name="Kapur V."/>
            <person name="Alt D.P."/>
            <person name="Olsen S.C."/>
        </authorList>
    </citation>
    <scope>NUCLEOTIDE SEQUENCE [LARGE SCALE GENOMIC DNA]</scope>
    <source>
        <strain>9-941</strain>
    </source>
</reference>
<dbReference type="EC" id="2.3.1.274" evidence="1"/>
<dbReference type="EMBL" id="AE017223">
    <property type="protein sequence ID" value="AAX74159.1"/>
    <property type="molecule type" value="Genomic_DNA"/>
</dbReference>
<dbReference type="RefSeq" id="WP_002963912.1">
    <property type="nucleotide sequence ID" value="NC_006932.1"/>
</dbReference>
<dbReference type="SMR" id="Q57DX5"/>
<dbReference type="EnsemblBacteria" id="AAX74159">
    <property type="protein sequence ID" value="AAX74159"/>
    <property type="gene ID" value="BruAb1_0791"/>
</dbReference>
<dbReference type="GeneID" id="93016835"/>
<dbReference type="KEGG" id="bmb:BruAb1_0791"/>
<dbReference type="HOGENOM" id="CLU_039379_1_0_5"/>
<dbReference type="UniPathway" id="UPA00085"/>
<dbReference type="Proteomes" id="UP000000540">
    <property type="component" value="Chromosome I"/>
</dbReference>
<dbReference type="GO" id="GO:0005737">
    <property type="term" value="C:cytoplasm"/>
    <property type="evidence" value="ECO:0007669"/>
    <property type="project" value="UniProtKB-SubCell"/>
</dbReference>
<dbReference type="GO" id="GO:0043811">
    <property type="term" value="F:phosphate:acyl-[acyl carrier protein] acyltransferase activity"/>
    <property type="evidence" value="ECO:0007669"/>
    <property type="project" value="UniProtKB-UniRule"/>
</dbReference>
<dbReference type="GO" id="GO:0006633">
    <property type="term" value="P:fatty acid biosynthetic process"/>
    <property type="evidence" value="ECO:0007669"/>
    <property type="project" value="UniProtKB-UniRule"/>
</dbReference>
<dbReference type="GO" id="GO:0008654">
    <property type="term" value="P:phospholipid biosynthetic process"/>
    <property type="evidence" value="ECO:0007669"/>
    <property type="project" value="UniProtKB-KW"/>
</dbReference>
<dbReference type="Gene3D" id="3.40.718.10">
    <property type="entry name" value="Isopropylmalate Dehydrogenase"/>
    <property type="match status" value="1"/>
</dbReference>
<dbReference type="HAMAP" id="MF_00019">
    <property type="entry name" value="PlsX"/>
    <property type="match status" value="1"/>
</dbReference>
<dbReference type="InterPro" id="IPR003664">
    <property type="entry name" value="FA_synthesis"/>
</dbReference>
<dbReference type="InterPro" id="IPR012281">
    <property type="entry name" value="Phospholipid_synth_PlsX-like"/>
</dbReference>
<dbReference type="NCBIfam" id="TIGR00182">
    <property type="entry name" value="plsX"/>
    <property type="match status" value="1"/>
</dbReference>
<dbReference type="PANTHER" id="PTHR30100">
    <property type="entry name" value="FATTY ACID/PHOSPHOLIPID SYNTHESIS PROTEIN PLSX"/>
    <property type="match status" value="1"/>
</dbReference>
<dbReference type="PANTHER" id="PTHR30100:SF1">
    <property type="entry name" value="PHOSPHATE ACYLTRANSFERASE"/>
    <property type="match status" value="1"/>
</dbReference>
<dbReference type="Pfam" id="PF02504">
    <property type="entry name" value="FA_synthesis"/>
    <property type="match status" value="1"/>
</dbReference>
<dbReference type="PIRSF" id="PIRSF002465">
    <property type="entry name" value="Phsphlp_syn_PlsX"/>
    <property type="match status" value="1"/>
</dbReference>
<dbReference type="SUPFAM" id="SSF53659">
    <property type="entry name" value="Isocitrate/Isopropylmalate dehydrogenase-like"/>
    <property type="match status" value="1"/>
</dbReference>
<feature type="chain" id="PRO_1000001724" description="Phosphate acyltransferase">
    <location>
        <begin position="1"/>
        <end position="346"/>
    </location>
</feature>
<evidence type="ECO:0000255" key="1">
    <source>
        <dbReference type="HAMAP-Rule" id="MF_00019"/>
    </source>
</evidence>
<sequence>MIKISIDAMGGDFGPEVVIPGAAKAFERHPDIRFIFFGLPAQVEPVLARYPKLKEASEFRASEVAIGMDDKPSQALRAGRGKSSMWQAIEAVKTGDADACVSAGNTGALMAMSKFCLRMMSDVERPAIAGIWPTLRGESIVLDIGATIGADARQLVDYAVMGAGMARALFEVRKPTVGLLNVGTEEVKGLDEIKEAGQILRDTPLDGLEYSGFVEGNDIGKGTVDVVVTEGFTGNIALKTAEGTARQMAELLRQAMSRTLLAKIGYVFAKGAFDRLREKMDPNKVNGGVFLGLSGIVIKSHGGANAEGFCSAVEVGYDMVRNRLLEKIEADLAHFHHSHSHVSSKA</sequence>
<proteinExistence type="inferred from homology"/>
<protein>
    <recommendedName>
        <fullName evidence="1">Phosphate acyltransferase</fullName>
        <ecNumber evidence="1">2.3.1.274</ecNumber>
    </recommendedName>
    <alternativeName>
        <fullName evidence="1">Acyl-ACP phosphotransacylase</fullName>
    </alternativeName>
    <alternativeName>
        <fullName evidence="1">Acyl-[acyl-carrier-protein]--phosphate acyltransferase</fullName>
    </alternativeName>
    <alternativeName>
        <fullName evidence="1">Phosphate-acyl-ACP acyltransferase</fullName>
    </alternativeName>
</protein>
<name>PLSX_BRUAB</name>
<comment type="function">
    <text evidence="1">Catalyzes the reversible formation of acyl-phosphate (acyl-PO(4)) from acyl-[acyl-carrier-protein] (acyl-ACP). This enzyme utilizes acyl-ACP as fatty acyl donor, but not acyl-CoA.</text>
</comment>
<comment type="catalytic activity">
    <reaction evidence="1">
        <text>a fatty acyl-[ACP] + phosphate = an acyl phosphate + holo-[ACP]</text>
        <dbReference type="Rhea" id="RHEA:42292"/>
        <dbReference type="Rhea" id="RHEA-COMP:9685"/>
        <dbReference type="Rhea" id="RHEA-COMP:14125"/>
        <dbReference type="ChEBI" id="CHEBI:43474"/>
        <dbReference type="ChEBI" id="CHEBI:59918"/>
        <dbReference type="ChEBI" id="CHEBI:64479"/>
        <dbReference type="ChEBI" id="CHEBI:138651"/>
        <dbReference type="EC" id="2.3.1.274"/>
    </reaction>
</comment>
<comment type="pathway">
    <text evidence="1">Lipid metabolism; phospholipid metabolism.</text>
</comment>
<comment type="subunit">
    <text evidence="1">Homodimer. Probably interacts with PlsY.</text>
</comment>
<comment type="subcellular location">
    <subcellularLocation>
        <location evidence="1">Cytoplasm</location>
    </subcellularLocation>
    <text evidence="1">Associated with the membrane possibly through PlsY.</text>
</comment>
<comment type="similarity">
    <text evidence="1">Belongs to the PlsX family.</text>
</comment>
<organism>
    <name type="scientific">Brucella abortus biovar 1 (strain 9-941)</name>
    <dbReference type="NCBI Taxonomy" id="262698"/>
    <lineage>
        <taxon>Bacteria</taxon>
        <taxon>Pseudomonadati</taxon>
        <taxon>Pseudomonadota</taxon>
        <taxon>Alphaproteobacteria</taxon>
        <taxon>Hyphomicrobiales</taxon>
        <taxon>Brucellaceae</taxon>
        <taxon>Brucella/Ochrobactrum group</taxon>
        <taxon>Brucella</taxon>
    </lineage>
</organism>
<keyword id="KW-0963">Cytoplasm</keyword>
<keyword id="KW-0444">Lipid biosynthesis</keyword>
<keyword id="KW-0443">Lipid metabolism</keyword>
<keyword id="KW-0594">Phospholipid biosynthesis</keyword>
<keyword id="KW-1208">Phospholipid metabolism</keyword>
<keyword id="KW-0808">Transferase</keyword>
<gene>
    <name evidence="1" type="primary">plsX</name>
    <name type="ordered locus">BruAb1_0791</name>
</gene>
<accession>Q57DX5</accession>